<name>TXK1A_CORWE</name>
<reference key="1">
    <citation type="journal article" date="2014" name="Mol. Biol. Evol.">
        <title>Clawing through evolution: toxin diversification and convergence in the ancient lineage Chilopoda (centipedes).</title>
        <authorList>
            <person name="Undheim E.A."/>
            <person name="Jones A."/>
            <person name="Clauser K.R."/>
            <person name="Holland J.W."/>
            <person name="Pineda S.S."/>
            <person name="King G.F."/>
            <person name="Fry B.G."/>
        </authorList>
    </citation>
    <scope>NUCLEOTIDE SEQUENCE [MRNA]</scope>
    <scope>NOMENCLATURE</scope>
    <source>
        <tissue>Venom gland</tissue>
    </source>
</reference>
<keyword id="KW-1015">Disulfide bond</keyword>
<keyword id="KW-0964">Secreted</keyword>
<keyword id="KW-0732">Signal</keyword>
<keyword id="KW-0800">Toxin</keyword>
<comment type="subcellular location">
    <subcellularLocation>
        <location evidence="5">Secreted</location>
    </subcellularLocation>
</comment>
<comment type="tissue specificity">
    <text evidence="5">Expressed by the venom gland.</text>
</comment>
<comment type="PTM">
    <text evidence="4">Contains 3 disulfide bonds.</text>
</comment>
<comment type="similarity">
    <text evidence="4">Belongs to the scoloptoxin-20 family.</text>
</comment>
<comment type="caution">
    <text evidence="5">All C.westwoodi family members described in 'Undeheim et al., 2014' have not been imported into UniProtKB. Please, refer to this paper to access them.</text>
</comment>
<comment type="online information" name="National Center for Biotechnology Information (NCBI)">
    <link uri="https://www.ncbi.nlm.nih.gov/nuccore/GASL01000046"/>
</comment>
<dbReference type="GO" id="GO:0005576">
    <property type="term" value="C:extracellular region"/>
    <property type="evidence" value="ECO:0007669"/>
    <property type="project" value="UniProtKB-SubCell"/>
</dbReference>
<dbReference type="GO" id="GO:0090729">
    <property type="term" value="F:toxin activity"/>
    <property type="evidence" value="ECO:0007669"/>
    <property type="project" value="UniProtKB-KW"/>
</dbReference>
<organism>
    <name type="scientific">Cormocephalus westwoodi</name>
    <name type="common">Westwood's green centipede</name>
    <dbReference type="NCBI Taxonomy" id="1096223"/>
    <lineage>
        <taxon>Eukaryota</taxon>
        <taxon>Metazoa</taxon>
        <taxon>Ecdysozoa</taxon>
        <taxon>Arthropoda</taxon>
        <taxon>Myriapoda</taxon>
        <taxon>Chilopoda</taxon>
        <taxon>Pleurostigmophora</taxon>
        <taxon>Scolopendromorpha</taxon>
        <taxon>Scolopendridae</taxon>
        <taxon>Cormocephalus</taxon>
    </lineage>
</organism>
<proteinExistence type="evidence at transcript level"/>
<feature type="signal peptide" evidence="1">
    <location>
        <begin position="1"/>
        <end position="26"/>
    </location>
</feature>
<feature type="chain" id="PRO_0000446827" description="U-scoloptoxin(20)-Cw1a" evidence="4">
    <location>
        <begin position="27"/>
        <end position="120"/>
    </location>
</feature>
<feature type="region of interest" description="Disordered" evidence="2">
    <location>
        <begin position="87"/>
        <end position="106"/>
    </location>
</feature>
<feature type="compositionally biased region" description="Basic and acidic residues" evidence="2">
    <location>
        <begin position="97"/>
        <end position="106"/>
    </location>
</feature>
<accession>P0DQF0</accession>
<evidence type="ECO:0000255" key="1"/>
<evidence type="ECO:0000256" key="2">
    <source>
        <dbReference type="SAM" id="MobiDB-lite"/>
    </source>
</evidence>
<evidence type="ECO:0000303" key="3">
    <source>
    </source>
</evidence>
<evidence type="ECO:0000305" key="4"/>
<evidence type="ECO:0000305" key="5">
    <source>
    </source>
</evidence>
<sequence>MNSTDRLLGVLLAVVALILLIRISEANDCDLCGRECVSACGTKMFRVCCFNYNRKRSNMPPLWMPRSKIWEGADDPLVLLQHLAKKSSGKSLTTTKDSSESRKKEISEDKALQFLWRNND</sequence>
<protein>
    <recommendedName>
        <fullName evidence="3">U-scoloptoxin(20)-Cw1a</fullName>
        <shortName evidence="3">U-SLPTX(20)-Cw1a</shortName>
    </recommendedName>
</protein>